<proteinExistence type="inferred from homology"/>
<accession>A5FRV8</accession>
<name>RL13_DEHMB</name>
<comment type="function">
    <text evidence="1">This protein is one of the early assembly proteins of the 50S ribosomal subunit, although it is not seen to bind rRNA by itself. It is important during the early stages of 50S assembly.</text>
</comment>
<comment type="subunit">
    <text evidence="1">Part of the 50S ribosomal subunit.</text>
</comment>
<comment type="similarity">
    <text evidence="1">Belongs to the universal ribosomal protein uL13 family.</text>
</comment>
<gene>
    <name evidence="1" type="primary">rplM</name>
    <name type="ordered locus">DehaBAV1_0482</name>
</gene>
<dbReference type="EMBL" id="CP000688">
    <property type="protein sequence ID" value="ABQ17067.1"/>
    <property type="molecule type" value="Genomic_DNA"/>
</dbReference>
<dbReference type="SMR" id="A5FRV8"/>
<dbReference type="KEGG" id="deb:DehaBAV1_0482"/>
<dbReference type="PATRIC" id="fig|216389.18.peg.525"/>
<dbReference type="HOGENOM" id="CLU_082184_2_2_0"/>
<dbReference type="GO" id="GO:0022625">
    <property type="term" value="C:cytosolic large ribosomal subunit"/>
    <property type="evidence" value="ECO:0007669"/>
    <property type="project" value="TreeGrafter"/>
</dbReference>
<dbReference type="GO" id="GO:0003729">
    <property type="term" value="F:mRNA binding"/>
    <property type="evidence" value="ECO:0007669"/>
    <property type="project" value="TreeGrafter"/>
</dbReference>
<dbReference type="GO" id="GO:0003735">
    <property type="term" value="F:structural constituent of ribosome"/>
    <property type="evidence" value="ECO:0007669"/>
    <property type="project" value="InterPro"/>
</dbReference>
<dbReference type="GO" id="GO:0017148">
    <property type="term" value="P:negative regulation of translation"/>
    <property type="evidence" value="ECO:0007669"/>
    <property type="project" value="TreeGrafter"/>
</dbReference>
<dbReference type="GO" id="GO:0006412">
    <property type="term" value="P:translation"/>
    <property type="evidence" value="ECO:0007669"/>
    <property type="project" value="UniProtKB-UniRule"/>
</dbReference>
<dbReference type="CDD" id="cd00392">
    <property type="entry name" value="Ribosomal_L13"/>
    <property type="match status" value="1"/>
</dbReference>
<dbReference type="Gene3D" id="3.90.1180.10">
    <property type="entry name" value="Ribosomal protein L13"/>
    <property type="match status" value="1"/>
</dbReference>
<dbReference type="HAMAP" id="MF_01366">
    <property type="entry name" value="Ribosomal_uL13"/>
    <property type="match status" value="1"/>
</dbReference>
<dbReference type="InterPro" id="IPR005822">
    <property type="entry name" value="Ribosomal_uL13"/>
</dbReference>
<dbReference type="InterPro" id="IPR005823">
    <property type="entry name" value="Ribosomal_uL13_bac-type"/>
</dbReference>
<dbReference type="InterPro" id="IPR023563">
    <property type="entry name" value="Ribosomal_uL13_CS"/>
</dbReference>
<dbReference type="InterPro" id="IPR036899">
    <property type="entry name" value="Ribosomal_uL13_sf"/>
</dbReference>
<dbReference type="NCBIfam" id="TIGR01066">
    <property type="entry name" value="rplM_bact"/>
    <property type="match status" value="1"/>
</dbReference>
<dbReference type="PANTHER" id="PTHR11545:SF2">
    <property type="entry name" value="LARGE RIBOSOMAL SUBUNIT PROTEIN UL13M"/>
    <property type="match status" value="1"/>
</dbReference>
<dbReference type="PANTHER" id="PTHR11545">
    <property type="entry name" value="RIBOSOMAL PROTEIN L13"/>
    <property type="match status" value="1"/>
</dbReference>
<dbReference type="Pfam" id="PF00572">
    <property type="entry name" value="Ribosomal_L13"/>
    <property type="match status" value="1"/>
</dbReference>
<dbReference type="PIRSF" id="PIRSF002181">
    <property type="entry name" value="Ribosomal_L13"/>
    <property type="match status" value="1"/>
</dbReference>
<dbReference type="SUPFAM" id="SSF52161">
    <property type="entry name" value="Ribosomal protein L13"/>
    <property type="match status" value="1"/>
</dbReference>
<dbReference type="PROSITE" id="PS00783">
    <property type="entry name" value="RIBOSOMAL_L13"/>
    <property type="match status" value="1"/>
</dbReference>
<organism>
    <name type="scientific">Dehalococcoides mccartyi (strain ATCC BAA-2100 / JCM 16839 / KCTC 5957 / BAV1)</name>
    <dbReference type="NCBI Taxonomy" id="216389"/>
    <lineage>
        <taxon>Bacteria</taxon>
        <taxon>Bacillati</taxon>
        <taxon>Chloroflexota</taxon>
        <taxon>Dehalococcoidia</taxon>
        <taxon>Dehalococcoidales</taxon>
        <taxon>Dehalococcoidaceae</taxon>
        <taxon>Dehalococcoides</taxon>
    </lineage>
</organism>
<sequence length="143" mass="15873">MNTYTVKASDIKRDWHVIDASGRVLGEVAAEAAKYLMGKHKPMFCRNLDCGDYVVIVNAKKITVTGNKLDQKMYYRHSGFPGGFRQEKLGDLLKTKPLFVIEHAVKGMIPRNTLGAQILAKLKVYEGAEHPHASQTGVVSKES</sequence>
<reference key="1">
    <citation type="submission" date="2007-05" db="EMBL/GenBank/DDBJ databases">
        <title>Complete sequence of Dehalococcoides sp. BAV1.</title>
        <authorList>
            <consortium name="US DOE Joint Genome Institute"/>
            <person name="Copeland A."/>
            <person name="Lucas S."/>
            <person name="Lapidus A."/>
            <person name="Barry K."/>
            <person name="Detter J.C."/>
            <person name="Glavina del Rio T."/>
            <person name="Hammon N."/>
            <person name="Israni S."/>
            <person name="Pitluck S."/>
            <person name="Lowry S."/>
            <person name="Clum A."/>
            <person name="Schmutz J."/>
            <person name="Larimer F."/>
            <person name="Land M."/>
            <person name="Hauser L."/>
            <person name="Kyrpides N."/>
            <person name="Kim E."/>
            <person name="Ritalahti K.M."/>
            <person name="Loeffler F."/>
            <person name="Richardson P."/>
        </authorList>
    </citation>
    <scope>NUCLEOTIDE SEQUENCE [LARGE SCALE GENOMIC DNA]</scope>
    <source>
        <strain>ATCC BAA-2100 / JCM 16839 / KCTC 5957 / BAV1</strain>
    </source>
</reference>
<evidence type="ECO:0000255" key="1">
    <source>
        <dbReference type="HAMAP-Rule" id="MF_01366"/>
    </source>
</evidence>
<evidence type="ECO:0000305" key="2"/>
<protein>
    <recommendedName>
        <fullName evidence="1">Large ribosomal subunit protein uL13</fullName>
    </recommendedName>
    <alternativeName>
        <fullName evidence="2">50S ribosomal protein L13</fullName>
    </alternativeName>
</protein>
<feature type="chain" id="PRO_1000087085" description="Large ribosomal subunit protein uL13">
    <location>
        <begin position="1"/>
        <end position="143"/>
    </location>
</feature>
<keyword id="KW-0687">Ribonucleoprotein</keyword>
<keyword id="KW-0689">Ribosomal protein</keyword>